<keyword id="KW-0903">Direct protein sequencing</keyword>
<keyword id="KW-1015">Disulfide bond</keyword>
<keyword id="KW-0325">Glycoprotein</keyword>
<keyword id="KW-0593">Phospholipase A2 inhibitor</keyword>
<keyword id="KW-0964">Secreted</keyword>
<keyword id="KW-0732">Signal</keyword>
<protein>
    <recommendedName>
        <fullName>Phospholipase A2 inhibitor 1</fullName>
    </recommendedName>
    <alternativeName>
        <fullName>Phospholipase A2 inhibitor I</fullName>
        <shortName>PLI-I</shortName>
    </alternativeName>
    <alternativeName>
        <fullName>gamma-PLI</fullName>
    </alternativeName>
</protein>
<evidence type="ECO:0000250" key="1">
    <source>
        <dbReference type="UniProtKB" id="Q7LZI1"/>
    </source>
</evidence>
<evidence type="ECO:0000250" key="2">
    <source>
        <dbReference type="UniProtKB" id="Q90358"/>
    </source>
</evidence>
<evidence type="ECO:0000269" key="3">
    <source>
    </source>
</evidence>
<evidence type="ECO:0000305" key="4"/>
<evidence type="ECO:0000305" key="5">
    <source>
    </source>
</evidence>
<feature type="signal peptide" evidence="3">
    <location>
        <begin position="1"/>
        <end position="19"/>
    </location>
</feature>
<feature type="chain" id="PRO_0000023004" description="Phospholipase A2 inhibitor 1" evidence="5">
    <location>
        <begin position="20"/>
        <end position="200"/>
    </location>
</feature>
<feature type="glycosylation site" description="N-linked (GlcNAc...) asparagine" evidence="5">
    <location>
        <position position="176"/>
    </location>
</feature>
<feature type="disulfide bond" evidence="1">
    <location>
        <begin position="22"/>
        <end position="46"/>
    </location>
</feature>
<feature type="disulfide bond" evidence="1">
    <location>
        <begin position="25"/>
        <end position="32"/>
    </location>
</feature>
<feature type="disulfide bond" evidence="1">
    <location>
        <begin position="39"/>
        <end position="67"/>
    </location>
</feature>
<feature type="disulfide bond" evidence="1">
    <location>
        <begin position="73"/>
        <end position="94"/>
    </location>
</feature>
<feature type="disulfide bond" evidence="1">
    <location>
        <begin position="95"/>
        <end position="100"/>
    </location>
</feature>
<feature type="disulfide bond" evidence="1">
    <location>
        <begin position="118"/>
        <end position="143"/>
    </location>
</feature>
<feature type="disulfide bond" evidence="1">
    <location>
        <begin position="136"/>
        <end position="165"/>
    </location>
</feature>
<feature type="disulfide bond" evidence="1">
    <location>
        <begin position="169"/>
        <end position="191"/>
    </location>
</feature>
<reference key="1">
    <citation type="journal article" date="1997" name="Eur. J. Biochem.">
        <title>Characterization and evolution of a gene encoding a Trimeresurus flavoviridis serum protein that inhibits basic phospholipase A2 isozymes in the snake's venom.</title>
        <authorList>
            <person name="Nobuhisa I."/>
            <person name="Inamasu S."/>
            <person name="Nakai M."/>
            <person name="Tatsui A."/>
            <person name="Mimori T."/>
            <person name="Ogawa T."/>
            <person name="Shimohigashi Y."/>
            <person name="Fukumaki Y."/>
            <person name="Hattori S."/>
            <person name="Kihara H."/>
            <person name="Ohno M."/>
        </authorList>
    </citation>
    <scope>NUCLEOTIDE SEQUENCE [GENOMIC DNA / MRNA]</scope>
    <scope>PROTEIN SEQUENCE OF 20-47; 49-121; 126-160 AND 164-200</scope>
    <scope>GLYCOSYLATION</scope>
    <scope>SUBCELLULAR LOCATION</scope>
    <source>
        <tissue>Liver</tissue>
    </source>
</reference>
<accession>O57690</accession>
<sequence>MKSLHIICLLFIFVARGNSRSCDFCHNIGADCEGFQHECSSPEDECGKVFLEISSASLSVRTVHKNCFSSSVCKLRHFDVNIGHDSYIRGRINCCEKEPCEDQSFPGLPLSQPNGYYCPGSLGLFTKDSTEFEAICKGTETKCINIVGHRYEHYPGDIAYNLKGCISSCPLLSLSNATHEENRNYLEKVECKDALQFEKQ</sequence>
<comment type="function">
    <text>Inhibits basic phospholipase A2 isozymes PLA-B, BP-I and BP-II.</text>
</comment>
<comment type="subunit">
    <text evidence="2">Occurs as a mixture of oligomers. Tetrameric arrangement appears to be the predominant quaternary structure.</text>
</comment>
<comment type="subcellular location">
    <subcellularLocation>
        <location evidence="3">Secreted</location>
    </subcellularLocation>
    <text evidence="3">Secreted in blood plasma.</text>
</comment>
<comment type="tissue specificity">
    <text evidence="5">Expressed by the liver.</text>
</comment>
<comment type="PTM">
    <text evidence="3">N-glycosylated.</text>
</comment>
<comment type="similarity">
    <text evidence="4">Belongs to the CNF-like-inhibitor family.</text>
</comment>
<name>PLIG1_PROFL</name>
<organism>
    <name type="scientific">Protobothrops flavoviridis</name>
    <name type="common">Habu</name>
    <name type="synonym">Trimeresurus flavoviridis</name>
    <dbReference type="NCBI Taxonomy" id="88087"/>
    <lineage>
        <taxon>Eukaryota</taxon>
        <taxon>Metazoa</taxon>
        <taxon>Chordata</taxon>
        <taxon>Craniata</taxon>
        <taxon>Vertebrata</taxon>
        <taxon>Euteleostomi</taxon>
        <taxon>Lepidosauria</taxon>
        <taxon>Squamata</taxon>
        <taxon>Bifurcata</taxon>
        <taxon>Unidentata</taxon>
        <taxon>Episquamata</taxon>
        <taxon>Toxicofera</taxon>
        <taxon>Serpentes</taxon>
        <taxon>Colubroidea</taxon>
        <taxon>Viperidae</taxon>
        <taxon>Crotalinae</taxon>
        <taxon>Protobothrops</taxon>
    </lineage>
</organism>
<dbReference type="EMBL" id="AB003473">
    <property type="protein sequence ID" value="BAA24503.1"/>
    <property type="molecule type" value="Genomic_DNA"/>
</dbReference>
<dbReference type="EMBL" id="AB003472">
    <property type="protein sequence ID" value="BAA24502.1"/>
    <property type="molecule type" value="mRNA"/>
</dbReference>
<dbReference type="iPTMnet" id="O57690"/>
<dbReference type="GO" id="GO:0005576">
    <property type="term" value="C:extracellular region"/>
    <property type="evidence" value="ECO:0007669"/>
    <property type="project" value="UniProtKB-SubCell"/>
</dbReference>
<dbReference type="GO" id="GO:0019834">
    <property type="term" value="F:phospholipase A2 inhibitor activity"/>
    <property type="evidence" value="ECO:0007669"/>
    <property type="project" value="UniProtKB-KW"/>
</dbReference>
<dbReference type="CDD" id="cd23629">
    <property type="entry name" value="TFP_LU_ECD_PLIGA"/>
    <property type="match status" value="1"/>
</dbReference>
<dbReference type="Gene3D" id="2.10.60.10">
    <property type="entry name" value="CD59"/>
    <property type="match status" value="1"/>
</dbReference>
<dbReference type="InterPro" id="IPR050918">
    <property type="entry name" value="CNF-like_PLA2_Inhibitor"/>
</dbReference>
<dbReference type="InterPro" id="IPR016054">
    <property type="entry name" value="LY6_UPA_recep-like"/>
</dbReference>
<dbReference type="InterPro" id="IPR016338">
    <property type="entry name" value="PLipase_A2-inh_b-type"/>
</dbReference>
<dbReference type="InterPro" id="IPR004126">
    <property type="entry name" value="PLipase_A2_inh_N"/>
</dbReference>
<dbReference type="InterPro" id="IPR045860">
    <property type="entry name" value="Snake_toxin-like_sf"/>
</dbReference>
<dbReference type="PANTHER" id="PTHR20914">
    <property type="entry name" value="LY6/PLAUR DOMAIN-CONTAINING PROTEIN 8"/>
    <property type="match status" value="1"/>
</dbReference>
<dbReference type="PANTHER" id="PTHR20914:SF30">
    <property type="entry name" value="LY6_PLAUR DOMAIN CONTAINING 9"/>
    <property type="match status" value="1"/>
</dbReference>
<dbReference type="Pfam" id="PF02988">
    <property type="entry name" value="PLA2_inh"/>
    <property type="match status" value="1"/>
</dbReference>
<dbReference type="PIRSF" id="PIRSF002023">
    <property type="entry name" value="PLA2_inhib_alpha/gamma"/>
    <property type="match status" value="1"/>
</dbReference>
<dbReference type="SMART" id="SM00134">
    <property type="entry name" value="LU"/>
    <property type="match status" value="1"/>
</dbReference>
<dbReference type="SUPFAM" id="SSF57302">
    <property type="entry name" value="Snake toxin-like"/>
    <property type="match status" value="1"/>
</dbReference>
<proteinExistence type="evidence at protein level"/>